<evidence type="ECO:0000250" key="1"/>
<evidence type="ECO:0000305" key="2"/>
<name>CSD2_MYCLE</name>
<keyword id="KW-0663">Pyridoxal phosphate</keyword>
<keyword id="KW-1185">Reference proteome</keyword>
<keyword id="KW-0808">Transferase</keyword>
<organism>
    <name type="scientific">Mycobacterium leprae (strain TN)</name>
    <dbReference type="NCBI Taxonomy" id="272631"/>
    <lineage>
        <taxon>Bacteria</taxon>
        <taxon>Bacillati</taxon>
        <taxon>Actinomycetota</taxon>
        <taxon>Actinomycetes</taxon>
        <taxon>Mycobacteriales</taxon>
        <taxon>Mycobacteriaceae</taxon>
        <taxon>Mycobacterium</taxon>
    </lineage>
</organism>
<accession>Q49690</accession>
<protein>
    <recommendedName>
        <fullName>Probable cysteine desulfurase 2</fullName>
        <ecNumber>2.8.1.7</ecNumber>
    </recommendedName>
</protein>
<gene>
    <name type="primary">csd2</name>
    <name type="ordered locus">ML0596</name>
    <name type="ORF">B1496_C2_193</name>
    <name type="ORF">MLCL536.25c</name>
</gene>
<dbReference type="EC" id="2.8.1.7"/>
<dbReference type="EMBL" id="U00013">
    <property type="protein sequence ID" value="AAA17128.1"/>
    <property type="molecule type" value="Genomic_DNA"/>
</dbReference>
<dbReference type="EMBL" id="Z99125">
    <property type="protein sequence ID" value="CAB16168.1"/>
    <property type="molecule type" value="Genomic_DNA"/>
</dbReference>
<dbReference type="EMBL" id="AL583919">
    <property type="protein sequence ID" value="CAC30104.1"/>
    <property type="molecule type" value="Genomic_DNA"/>
</dbReference>
<dbReference type="PIR" id="S72761">
    <property type="entry name" value="S72761"/>
</dbReference>
<dbReference type="RefSeq" id="NP_301505.1">
    <property type="nucleotide sequence ID" value="NC_002677.1"/>
</dbReference>
<dbReference type="RefSeq" id="WP_010907829.1">
    <property type="nucleotide sequence ID" value="NC_002677.1"/>
</dbReference>
<dbReference type="SMR" id="Q49690"/>
<dbReference type="STRING" id="272631.gene:17574417"/>
<dbReference type="KEGG" id="mle:ML0596"/>
<dbReference type="PATRIC" id="fig|272631.5.peg.1034"/>
<dbReference type="Leproma" id="ML0596"/>
<dbReference type="eggNOG" id="COG0520">
    <property type="taxonomic scope" value="Bacteria"/>
</dbReference>
<dbReference type="HOGENOM" id="CLU_003433_2_5_11"/>
<dbReference type="OrthoDB" id="9804366at2"/>
<dbReference type="Proteomes" id="UP000000806">
    <property type="component" value="Chromosome"/>
</dbReference>
<dbReference type="GO" id="GO:0031071">
    <property type="term" value="F:cysteine desulfurase activity"/>
    <property type="evidence" value="ECO:0007669"/>
    <property type="project" value="UniProtKB-EC"/>
</dbReference>
<dbReference type="GO" id="GO:0030170">
    <property type="term" value="F:pyridoxal phosphate binding"/>
    <property type="evidence" value="ECO:0007669"/>
    <property type="project" value="InterPro"/>
</dbReference>
<dbReference type="GO" id="GO:0006534">
    <property type="term" value="P:cysteine metabolic process"/>
    <property type="evidence" value="ECO:0007669"/>
    <property type="project" value="InterPro"/>
</dbReference>
<dbReference type="CDD" id="cd06453">
    <property type="entry name" value="SufS_like"/>
    <property type="match status" value="1"/>
</dbReference>
<dbReference type="Gene3D" id="3.90.1150.10">
    <property type="entry name" value="Aspartate Aminotransferase, domain 1"/>
    <property type="match status" value="1"/>
</dbReference>
<dbReference type="Gene3D" id="3.40.640.10">
    <property type="entry name" value="Type I PLP-dependent aspartate aminotransferase-like (Major domain)"/>
    <property type="match status" value="1"/>
</dbReference>
<dbReference type="InterPro" id="IPR000192">
    <property type="entry name" value="Aminotrans_V_dom"/>
</dbReference>
<dbReference type="InterPro" id="IPR020578">
    <property type="entry name" value="Aminotrans_V_PyrdxlP_BS"/>
</dbReference>
<dbReference type="InterPro" id="IPR010970">
    <property type="entry name" value="Cys_dSase_SufS"/>
</dbReference>
<dbReference type="InterPro" id="IPR015424">
    <property type="entry name" value="PyrdxlP-dep_Trfase"/>
</dbReference>
<dbReference type="InterPro" id="IPR015421">
    <property type="entry name" value="PyrdxlP-dep_Trfase_major"/>
</dbReference>
<dbReference type="InterPro" id="IPR015422">
    <property type="entry name" value="PyrdxlP-dep_Trfase_small"/>
</dbReference>
<dbReference type="NCBIfam" id="TIGR01979">
    <property type="entry name" value="sufS"/>
    <property type="match status" value="1"/>
</dbReference>
<dbReference type="PANTHER" id="PTHR43586">
    <property type="entry name" value="CYSTEINE DESULFURASE"/>
    <property type="match status" value="1"/>
</dbReference>
<dbReference type="PANTHER" id="PTHR43586:SF8">
    <property type="entry name" value="CYSTEINE DESULFURASE 1, CHLOROPLASTIC"/>
    <property type="match status" value="1"/>
</dbReference>
<dbReference type="Pfam" id="PF00266">
    <property type="entry name" value="Aminotran_5"/>
    <property type="match status" value="1"/>
</dbReference>
<dbReference type="SUPFAM" id="SSF53383">
    <property type="entry name" value="PLP-dependent transferases"/>
    <property type="match status" value="1"/>
</dbReference>
<dbReference type="PROSITE" id="PS00595">
    <property type="entry name" value="AA_TRANSFER_CLASS_5"/>
    <property type="match status" value="1"/>
</dbReference>
<sequence length="418" mass="44894">MTISLTPLDLSAIRADFPILKRVMRGGNQLAYLDSGATSQRPVQVLDAEREFLVTSNGAVHRGAHQLMEEATDAYERGRVDIAAFIGAAADELVFTKNATESLNLVSYVFGDNRFEGTSGDGGDVIVTTELEHHANLIPWQELARRIGATLRWYGVTDDGQIDLDSLQLDERVKVVAFSHHSNVTGAVAPVRELVARAKEVGALTVLDACQSVPHQPVDLHGLGVDFAAFSGHKMLGPNGIGVLYARRELLSVMPPFLTGGSMIETVTMESTTYAPAPQRFEAGTPMTSQVVGLAAAARYLDAIGMKAVEAHERELVAAAVEGLSRIDGVRIIGPKSMENRGSPVSFVVDGVHAHDIGQVLDDDGVAVRVGHHCALPLHRRFALAATARASFAVYNTVDEVDRLVAGVLRALDFFGRE</sequence>
<feature type="chain" id="PRO_0000150302" description="Probable cysteine desulfurase 2">
    <location>
        <begin position="1"/>
        <end position="418"/>
    </location>
</feature>
<feature type="active site" description="Cysteine persulfide intermediate" evidence="1">
    <location>
        <position position="374"/>
    </location>
</feature>
<feature type="modified residue" description="N6-(pyridoxal phosphate)lysine" evidence="1">
    <location>
        <position position="234"/>
    </location>
</feature>
<comment type="function">
    <text evidence="1">Catalyzes the removal of elemental sulfur and selenium atoms from L-cysteine, L-cystine, L-selenocysteine, and L-selenocystine to produce L-alanine.</text>
</comment>
<comment type="catalytic activity">
    <reaction>
        <text>(sulfur carrier)-H + L-cysteine = (sulfur carrier)-SH + L-alanine</text>
        <dbReference type="Rhea" id="RHEA:43892"/>
        <dbReference type="Rhea" id="RHEA-COMP:14737"/>
        <dbReference type="Rhea" id="RHEA-COMP:14739"/>
        <dbReference type="ChEBI" id="CHEBI:29917"/>
        <dbReference type="ChEBI" id="CHEBI:35235"/>
        <dbReference type="ChEBI" id="CHEBI:57972"/>
        <dbReference type="ChEBI" id="CHEBI:64428"/>
        <dbReference type="EC" id="2.8.1.7"/>
    </reaction>
</comment>
<comment type="cofactor">
    <cofactor evidence="1">
        <name>pyridoxal 5'-phosphate</name>
        <dbReference type="ChEBI" id="CHEBI:597326"/>
    </cofactor>
</comment>
<comment type="similarity">
    <text evidence="2">Belongs to the class-V pyridoxal-phosphate-dependent aminotransferase family. Csd subfamily.</text>
</comment>
<reference key="1">
    <citation type="submission" date="1994-03" db="EMBL/GenBank/DDBJ databases">
        <authorList>
            <person name="Smith D.R."/>
            <person name="Robison K."/>
        </authorList>
    </citation>
    <scope>NUCLEOTIDE SEQUENCE [GENOMIC DNA]</scope>
</reference>
<reference key="2">
    <citation type="journal article" date="2001" name="Nature">
        <title>Massive gene decay in the leprosy bacillus.</title>
        <authorList>
            <person name="Cole S.T."/>
            <person name="Eiglmeier K."/>
            <person name="Parkhill J."/>
            <person name="James K.D."/>
            <person name="Thomson N.R."/>
            <person name="Wheeler P.R."/>
            <person name="Honore N."/>
            <person name="Garnier T."/>
            <person name="Churcher C.M."/>
            <person name="Harris D.E."/>
            <person name="Mungall K.L."/>
            <person name="Basham D."/>
            <person name="Brown D."/>
            <person name="Chillingworth T."/>
            <person name="Connor R."/>
            <person name="Davies R.M."/>
            <person name="Devlin K."/>
            <person name="Duthoy S."/>
            <person name="Feltwell T."/>
            <person name="Fraser A."/>
            <person name="Hamlin N."/>
            <person name="Holroyd S."/>
            <person name="Hornsby T."/>
            <person name="Jagels K."/>
            <person name="Lacroix C."/>
            <person name="Maclean J."/>
            <person name="Moule S."/>
            <person name="Murphy L.D."/>
            <person name="Oliver K."/>
            <person name="Quail M.A."/>
            <person name="Rajandream M.A."/>
            <person name="Rutherford K.M."/>
            <person name="Rutter S."/>
            <person name="Seeger K."/>
            <person name="Simon S."/>
            <person name="Simmonds M."/>
            <person name="Skelton J."/>
            <person name="Squares R."/>
            <person name="Squares S."/>
            <person name="Stevens K."/>
            <person name="Taylor K."/>
            <person name="Whitehead S."/>
            <person name="Woodward J.R."/>
            <person name="Barrell B.G."/>
        </authorList>
    </citation>
    <scope>NUCLEOTIDE SEQUENCE [LARGE SCALE GENOMIC DNA]</scope>
    <source>
        <strain>TN</strain>
    </source>
</reference>
<proteinExistence type="inferred from homology"/>